<proteinExistence type="inferred from homology"/>
<name>RIMO_CHLL2</name>
<gene>
    <name evidence="1" type="primary">rimO</name>
    <name type="ordered locus">Clim_1592</name>
</gene>
<sequence>MHNIFLLSLGCSKNTVDSERLMAQAAASGMIFTEFADDADIILINTCGFIQDAKEESIAETLAAIRKKQDEKVRKVYVMGCLPELYRKELADEMPEIDGFFGTRELPDVLRAIGAEYREELLDRRILLTPPHYAFLKIAEGCNRQCSFCSIPKIRGRYVSQPPEQLLREAALLRQSGVRELNLIAQDISVYGCDLDGSSLLNDLVLRLSDMEFERIRLLYAYPLNFPMEVIDTMRERENVCNYLDMPLQHISDRILRSMNRGIDSTGTVRLIESIRQRNPDIRLRTTMIAGYPGETGEEFEELLQFVAETRFDRLGCFPYSHEEHSPAYRLEDDVIPEKKQDRVAELMELQETISQEKNREFEGNEIVVLVDQVEENMVFGRTEYDAPEVDNECILETGNFDVRPGMFCRARITDSTPYDLEGEVIGIG</sequence>
<comment type="function">
    <text evidence="1">Catalyzes the methylthiolation of an aspartic acid residue of ribosomal protein uS12.</text>
</comment>
<comment type="catalytic activity">
    <reaction evidence="1">
        <text>L-aspartate(89)-[ribosomal protein uS12]-hydrogen + (sulfur carrier)-SH + AH2 + 2 S-adenosyl-L-methionine = 3-methylsulfanyl-L-aspartate(89)-[ribosomal protein uS12]-hydrogen + (sulfur carrier)-H + 5'-deoxyadenosine + L-methionine + A + S-adenosyl-L-homocysteine + 2 H(+)</text>
        <dbReference type="Rhea" id="RHEA:37087"/>
        <dbReference type="Rhea" id="RHEA-COMP:10460"/>
        <dbReference type="Rhea" id="RHEA-COMP:10461"/>
        <dbReference type="Rhea" id="RHEA-COMP:14737"/>
        <dbReference type="Rhea" id="RHEA-COMP:14739"/>
        <dbReference type="ChEBI" id="CHEBI:13193"/>
        <dbReference type="ChEBI" id="CHEBI:15378"/>
        <dbReference type="ChEBI" id="CHEBI:17319"/>
        <dbReference type="ChEBI" id="CHEBI:17499"/>
        <dbReference type="ChEBI" id="CHEBI:29917"/>
        <dbReference type="ChEBI" id="CHEBI:29961"/>
        <dbReference type="ChEBI" id="CHEBI:57844"/>
        <dbReference type="ChEBI" id="CHEBI:57856"/>
        <dbReference type="ChEBI" id="CHEBI:59789"/>
        <dbReference type="ChEBI" id="CHEBI:64428"/>
        <dbReference type="ChEBI" id="CHEBI:73599"/>
        <dbReference type="EC" id="2.8.4.4"/>
    </reaction>
</comment>
<comment type="cofactor">
    <cofactor evidence="1">
        <name>[4Fe-4S] cluster</name>
        <dbReference type="ChEBI" id="CHEBI:49883"/>
    </cofactor>
    <text evidence="1">Binds 2 [4Fe-4S] clusters. One cluster is coordinated with 3 cysteines and an exchangeable S-adenosyl-L-methionine.</text>
</comment>
<comment type="subcellular location">
    <subcellularLocation>
        <location evidence="1">Cytoplasm</location>
    </subcellularLocation>
</comment>
<comment type="similarity">
    <text evidence="1">Belongs to the methylthiotransferase family. RimO subfamily.</text>
</comment>
<accession>B3EDL2</accession>
<reference key="1">
    <citation type="submission" date="2008-05" db="EMBL/GenBank/DDBJ databases">
        <title>Complete sequence of Chlorobium limicola DSM 245.</title>
        <authorList>
            <consortium name="US DOE Joint Genome Institute"/>
            <person name="Lucas S."/>
            <person name="Copeland A."/>
            <person name="Lapidus A."/>
            <person name="Glavina del Rio T."/>
            <person name="Dalin E."/>
            <person name="Tice H."/>
            <person name="Bruce D."/>
            <person name="Goodwin L."/>
            <person name="Pitluck S."/>
            <person name="Schmutz J."/>
            <person name="Larimer F."/>
            <person name="Land M."/>
            <person name="Hauser L."/>
            <person name="Kyrpides N."/>
            <person name="Ovchinnikova G."/>
            <person name="Zhao F."/>
            <person name="Li T."/>
            <person name="Liu Z."/>
            <person name="Overmann J."/>
            <person name="Bryant D.A."/>
            <person name="Richardson P."/>
        </authorList>
    </citation>
    <scope>NUCLEOTIDE SEQUENCE [LARGE SCALE GENOMIC DNA]</scope>
    <source>
        <strain>DSM 245 / NBRC 103803 / 6330</strain>
    </source>
</reference>
<keyword id="KW-0004">4Fe-4S</keyword>
<keyword id="KW-0963">Cytoplasm</keyword>
<keyword id="KW-0408">Iron</keyword>
<keyword id="KW-0411">Iron-sulfur</keyword>
<keyword id="KW-0479">Metal-binding</keyword>
<keyword id="KW-0949">S-adenosyl-L-methionine</keyword>
<keyword id="KW-0808">Transferase</keyword>
<feature type="chain" id="PRO_0000374766" description="Ribosomal protein uS12 methylthiotransferase RimO">
    <location>
        <begin position="1"/>
        <end position="429"/>
    </location>
</feature>
<feature type="domain" description="MTTase N-terminal" evidence="1">
    <location>
        <begin position="2"/>
        <end position="118"/>
    </location>
</feature>
<feature type="domain" description="Radical SAM core" evidence="2">
    <location>
        <begin position="128"/>
        <end position="357"/>
    </location>
</feature>
<feature type="domain" description="TRAM" evidence="1">
    <location>
        <begin position="360"/>
        <end position="427"/>
    </location>
</feature>
<feature type="binding site" evidence="1">
    <location>
        <position position="11"/>
    </location>
    <ligand>
        <name>[4Fe-4S] cluster</name>
        <dbReference type="ChEBI" id="CHEBI:49883"/>
        <label>1</label>
    </ligand>
</feature>
<feature type="binding site" evidence="1">
    <location>
        <position position="47"/>
    </location>
    <ligand>
        <name>[4Fe-4S] cluster</name>
        <dbReference type="ChEBI" id="CHEBI:49883"/>
        <label>1</label>
    </ligand>
</feature>
<feature type="binding site" evidence="1">
    <location>
        <position position="81"/>
    </location>
    <ligand>
        <name>[4Fe-4S] cluster</name>
        <dbReference type="ChEBI" id="CHEBI:49883"/>
        <label>1</label>
    </ligand>
</feature>
<feature type="binding site" evidence="1">
    <location>
        <position position="142"/>
    </location>
    <ligand>
        <name>[4Fe-4S] cluster</name>
        <dbReference type="ChEBI" id="CHEBI:49883"/>
        <label>2</label>
        <note>4Fe-4S-S-AdoMet</note>
    </ligand>
</feature>
<feature type="binding site" evidence="1">
    <location>
        <position position="146"/>
    </location>
    <ligand>
        <name>[4Fe-4S] cluster</name>
        <dbReference type="ChEBI" id="CHEBI:49883"/>
        <label>2</label>
        <note>4Fe-4S-S-AdoMet</note>
    </ligand>
</feature>
<feature type="binding site" evidence="1">
    <location>
        <position position="149"/>
    </location>
    <ligand>
        <name>[4Fe-4S] cluster</name>
        <dbReference type="ChEBI" id="CHEBI:49883"/>
        <label>2</label>
        <note>4Fe-4S-S-AdoMet</note>
    </ligand>
</feature>
<dbReference type="EC" id="2.8.4.4" evidence="1"/>
<dbReference type="EMBL" id="CP001097">
    <property type="protein sequence ID" value="ACD90637.1"/>
    <property type="molecule type" value="Genomic_DNA"/>
</dbReference>
<dbReference type="RefSeq" id="WP_012466511.1">
    <property type="nucleotide sequence ID" value="NC_010803.1"/>
</dbReference>
<dbReference type="SMR" id="B3EDL2"/>
<dbReference type="STRING" id="290315.Clim_1592"/>
<dbReference type="KEGG" id="cli:Clim_1592"/>
<dbReference type="eggNOG" id="COG0621">
    <property type="taxonomic scope" value="Bacteria"/>
</dbReference>
<dbReference type="HOGENOM" id="CLU_018697_0_1_10"/>
<dbReference type="OrthoDB" id="9805215at2"/>
<dbReference type="Proteomes" id="UP000008841">
    <property type="component" value="Chromosome"/>
</dbReference>
<dbReference type="GO" id="GO:0005829">
    <property type="term" value="C:cytosol"/>
    <property type="evidence" value="ECO:0007669"/>
    <property type="project" value="TreeGrafter"/>
</dbReference>
<dbReference type="GO" id="GO:0051539">
    <property type="term" value="F:4 iron, 4 sulfur cluster binding"/>
    <property type="evidence" value="ECO:0007669"/>
    <property type="project" value="UniProtKB-UniRule"/>
</dbReference>
<dbReference type="GO" id="GO:0035599">
    <property type="term" value="F:aspartic acid methylthiotransferase activity"/>
    <property type="evidence" value="ECO:0007669"/>
    <property type="project" value="TreeGrafter"/>
</dbReference>
<dbReference type="GO" id="GO:0046872">
    <property type="term" value="F:metal ion binding"/>
    <property type="evidence" value="ECO:0007669"/>
    <property type="project" value="UniProtKB-KW"/>
</dbReference>
<dbReference type="GO" id="GO:0103039">
    <property type="term" value="F:protein methylthiotransferase activity"/>
    <property type="evidence" value="ECO:0007669"/>
    <property type="project" value="UniProtKB-EC"/>
</dbReference>
<dbReference type="GO" id="GO:0006400">
    <property type="term" value="P:tRNA modification"/>
    <property type="evidence" value="ECO:0007669"/>
    <property type="project" value="InterPro"/>
</dbReference>
<dbReference type="CDD" id="cd01335">
    <property type="entry name" value="Radical_SAM"/>
    <property type="match status" value="1"/>
</dbReference>
<dbReference type="FunFam" id="3.80.30.20:FF:000001">
    <property type="entry name" value="tRNA-2-methylthio-N(6)-dimethylallyladenosine synthase 2"/>
    <property type="match status" value="1"/>
</dbReference>
<dbReference type="Gene3D" id="3.40.50.12160">
    <property type="entry name" value="Methylthiotransferase, N-terminal domain"/>
    <property type="match status" value="1"/>
</dbReference>
<dbReference type="Gene3D" id="2.40.50.140">
    <property type="entry name" value="Nucleic acid-binding proteins"/>
    <property type="match status" value="1"/>
</dbReference>
<dbReference type="Gene3D" id="3.80.30.20">
    <property type="entry name" value="tm_1862 like domain"/>
    <property type="match status" value="1"/>
</dbReference>
<dbReference type="HAMAP" id="MF_01865">
    <property type="entry name" value="MTTase_RimO"/>
    <property type="match status" value="1"/>
</dbReference>
<dbReference type="InterPro" id="IPR006638">
    <property type="entry name" value="Elp3/MiaA/NifB-like_rSAM"/>
</dbReference>
<dbReference type="InterPro" id="IPR005839">
    <property type="entry name" value="Methylthiotransferase"/>
</dbReference>
<dbReference type="InterPro" id="IPR020612">
    <property type="entry name" value="Methylthiotransferase_CS"/>
</dbReference>
<dbReference type="InterPro" id="IPR013848">
    <property type="entry name" value="Methylthiotransferase_N"/>
</dbReference>
<dbReference type="InterPro" id="IPR038135">
    <property type="entry name" value="Methylthiotransferase_N_sf"/>
</dbReference>
<dbReference type="InterPro" id="IPR012340">
    <property type="entry name" value="NA-bd_OB-fold"/>
</dbReference>
<dbReference type="InterPro" id="IPR005840">
    <property type="entry name" value="Ribosomal_uS12_MeSTrfase_RimO"/>
</dbReference>
<dbReference type="InterPro" id="IPR007197">
    <property type="entry name" value="rSAM"/>
</dbReference>
<dbReference type="InterPro" id="IPR023404">
    <property type="entry name" value="rSAM_horseshoe"/>
</dbReference>
<dbReference type="InterPro" id="IPR002792">
    <property type="entry name" value="TRAM_dom"/>
</dbReference>
<dbReference type="NCBIfam" id="TIGR01125">
    <property type="entry name" value="30S ribosomal protein S12 methylthiotransferase RimO"/>
    <property type="match status" value="1"/>
</dbReference>
<dbReference type="NCBIfam" id="TIGR00089">
    <property type="entry name" value="MiaB/RimO family radical SAM methylthiotransferase"/>
    <property type="match status" value="1"/>
</dbReference>
<dbReference type="PANTHER" id="PTHR43837">
    <property type="entry name" value="RIBOSOMAL PROTEIN S12 METHYLTHIOTRANSFERASE RIMO"/>
    <property type="match status" value="1"/>
</dbReference>
<dbReference type="PANTHER" id="PTHR43837:SF1">
    <property type="entry name" value="RIBOSOMAL PROTEIN US12 METHYLTHIOTRANSFERASE RIMO"/>
    <property type="match status" value="1"/>
</dbReference>
<dbReference type="Pfam" id="PF04055">
    <property type="entry name" value="Radical_SAM"/>
    <property type="match status" value="1"/>
</dbReference>
<dbReference type="Pfam" id="PF18693">
    <property type="entry name" value="TRAM_2"/>
    <property type="match status" value="1"/>
</dbReference>
<dbReference type="Pfam" id="PF00919">
    <property type="entry name" value="UPF0004"/>
    <property type="match status" value="1"/>
</dbReference>
<dbReference type="SFLD" id="SFLDG01082">
    <property type="entry name" value="B12-binding_domain_containing"/>
    <property type="match status" value="1"/>
</dbReference>
<dbReference type="SFLD" id="SFLDG01061">
    <property type="entry name" value="methylthiotransferase"/>
    <property type="match status" value="1"/>
</dbReference>
<dbReference type="SFLD" id="SFLDF00274">
    <property type="entry name" value="ribosomal_protein_S12_methylth"/>
    <property type="match status" value="1"/>
</dbReference>
<dbReference type="SMART" id="SM00729">
    <property type="entry name" value="Elp3"/>
    <property type="match status" value="1"/>
</dbReference>
<dbReference type="SUPFAM" id="SSF102114">
    <property type="entry name" value="Radical SAM enzymes"/>
    <property type="match status" value="1"/>
</dbReference>
<dbReference type="PROSITE" id="PS51449">
    <property type="entry name" value="MTTASE_N"/>
    <property type="match status" value="1"/>
</dbReference>
<dbReference type="PROSITE" id="PS01278">
    <property type="entry name" value="MTTASE_RADICAL"/>
    <property type="match status" value="1"/>
</dbReference>
<dbReference type="PROSITE" id="PS51918">
    <property type="entry name" value="RADICAL_SAM"/>
    <property type="match status" value="1"/>
</dbReference>
<dbReference type="PROSITE" id="PS50926">
    <property type="entry name" value="TRAM"/>
    <property type="match status" value="1"/>
</dbReference>
<protein>
    <recommendedName>
        <fullName evidence="1">Ribosomal protein uS12 methylthiotransferase RimO</fullName>
        <shortName evidence="1">uS12 MTTase</shortName>
        <shortName evidence="1">uS12 methylthiotransferase</shortName>
        <ecNumber evidence="1">2.8.4.4</ecNumber>
    </recommendedName>
    <alternativeName>
        <fullName evidence="1">Ribosomal protein uS12 (aspartate-C(3))-methylthiotransferase</fullName>
    </alternativeName>
    <alternativeName>
        <fullName evidence="1">Ribosome maturation factor RimO</fullName>
    </alternativeName>
</protein>
<evidence type="ECO:0000255" key="1">
    <source>
        <dbReference type="HAMAP-Rule" id="MF_01865"/>
    </source>
</evidence>
<evidence type="ECO:0000255" key="2">
    <source>
        <dbReference type="PROSITE-ProRule" id="PRU01266"/>
    </source>
</evidence>
<organism>
    <name type="scientific">Chlorobium limicola (strain DSM 245 / NBRC 103803 / 6330)</name>
    <dbReference type="NCBI Taxonomy" id="290315"/>
    <lineage>
        <taxon>Bacteria</taxon>
        <taxon>Pseudomonadati</taxon>
        <taxon>Chlorobiota</taxon>
        <taxon>Chlorobiia</taxon>
        <taxon>Chlorobiales</taxon>
        <taxon>Chlorobiaceae</taxon>
        <taxon>Chlorobium/Pelodictyon group</taxon>
        <taxon>Chlorobium</taxon>
    </lineage>
</organism>